<accession>B4U2M2</accession>
<reference key="1">
    <citation type="journal article" date="2008" name="PLoS ONE">
        <title>Genome sequence of a lancefield group C Streptococcus zooepidemicus strain causing epidemic nephritis: new information about an old disease.</title>
        <authorList>
            <person name="Beres S.B."/>
            <person name="Sesso R."/>
            <person name="Pinto S.W.L."/>
            <person name="Hoe N.P."/>
            <person name="Porcella S.F."/>
            <person name="Deleo F.R."/>
            <person name="Musser J.M."/>
        </authorList>
    </citation>
    <scope>NUCLEOTIDE SEQUENCE [LARGE SCALE GENOMIC DNA]</scope>
    <source>
        <strain>MGCS10565</strain>
    </source>
</reference>
<sequence length="337" mass="35670">MKRIAVLTSGGDAPGMNAAIRAVVRKAISEGMEVYGINRGYAGMVDGDIFPLGSKEVGDKISRGGTFLYSARYPEFAQLEGQLAGIEQLKKHGIEGVVVIGGDGSYHGAMRLTEHGFPAVGIPGTIDNDIAGTDYTIGFDTAVNTAVEAIDKLRDTSSSHGRTFVVEVMGRNAGDIALWAGIASGADQIIVPEEEFDIHKVVSTIKDDFENRGKNHHIIVLAEGVMSGEAFAQQLKEAGDESDLRVTNLGHILRGGSPTARDRVIASWMGAHAVELLKEGKGGLAVGIHNEELVESPILGSAEDGALFSLTDEGNIVVNNPHKARLDYAALNRSLAQ</sequence>
<evidence type="ECO:0000255" key="1">
    <source>
        <dbReference type="HAMAP-Rule" id="MF_00339"/>
    </source>
</evidence>
<organism>
    <name type="scientific">Streptococcus equi subsp. zooepidemicus (strain MGCS10565)</name>
    <dbReference type="NCBI Taxonomy" id="552526"/>
    <lineage>
        <taxon>Bacteria</taxon>
        <taxon>Bacillati</taxon>
        <taxon>Bacillota</taxon>
        <taxon>Bacilli</taxon>
        <taxon>Lactobacillales</taxon>
        <taxon>Streptococcaceae</taxon>
        <taxon>Streptococcus</taxon>
    </lineage>
</organism>
<feature type="chain" id="PRO_1000120059" description="ATP-dependent 6-phosphofructokinase">
    <location>
        <begin position="1"/>
        <end position="337"/>
    </location>
</feature>
<feature type="active site" description="Proton acceptor" evidence="1">
    <location>
        <position position="127"/>
    </location>
</feature>
<feature type="binding site" evidence="1">
    <location>
        <position position="11"/>
    </location>
    <ligand>
        <name>ATP</name>
        <dbReference type="ChEBI" id="CHEBI:30616"/>
    </ligand>
</feature>
<feature type="binding site" evidence="1">
    <location>
        <begin position="21"/>
        <end position="25"/>
    </location>
    <ligand>
        <name>ADP</name>
        <dbReference type="ChEBI" id="CHEBI:456216"/>
        <note>allosteric activator; ligand shared between dimeric partners</note>
    </ligand>
</feature>
<feature type="binding site" evidence="1">
    <location>
        <begin position="72"/>
        <end position="73"/>
    </location>
    <ligand>
        <name>ATP</name>
        <dbReference type="ChEBI" id="CHEBI:30616"/>
    </ligand>
</feature>
<feature type="binding site" evidence="1">
    <location>
        <begin position="102"/>
        <end position="105"/>
    </location>
    <ligand>
        <name>ATP</name>
        <dbReference type="ChEBI" id="CHEBI:30616"/>
    </ligand>
</feature>
<feature type="binding site" evidence="1">
    <location>
        <position position="103"/>
    </location>
    <ligand>
        <name>Mg(2+)</name>
        <dbReference type="ChEBI" id="CHEBI:18420"/>
        <note>catalytic</note>
    </ligand>
</feature>
<feature type="binding site" description="in other chain" evidence="1">
    <location>
        <begin position="125"/>
        <end position="127"/>
    </location>
    <ligand>
        <name>substrate</name>
        <note>ligand shared between dimeric partners</note>
    </ligand>
</feature>
<feature type="binding site" description="in other chain" evidence="1">
    <location>
        <position position="154"/>
    </location>
    <ligand>
        <name>ADP</name>
        <dbReference type="ChEBI" id="CHEBI:456216"/>
        <note>allosteric activator; ligand shared between dimeric partners</note>
    </ligand>
</feature>
<feature type="binding site" evidence="1">
    <location>
        <position position="162"/>
    </location>
    <ligand>
        <name>substrate</name>
        <note>ligand shared between dimeric partners</note>
    </ligand>
</feature>
<feature type="binding site" description="in other chain" evidence="1">
    <location>
        <begin position="169"/>
        <end position="171"/>
    </location>
    <ligand>
        <name>substrate</name>
        <note>ligand shared between dimeric partners</note>
    </ligand>
</feature>
<feature type="binding site" description="in other chain" evidence="1">
    <location>
        <begin position="185"/>
        <end position="187"/>
    </location>
    <ligand>
        <name>ADP</name>
        <dbReference type="ChEBI" id="CHEBI:456216"/>
        <note>allosteric activator; ligand shared between dimeric partners</note>
    </ligand>
</feature>
<feature type="binding site" description="in other chain" evidence="1">
    <location>
        <position position="212"/>
    </location>
    <ligand>
        <name>ADP</name>
        <dbReference type="ChEBI" id="CHEBI:456216"/>
        <note>allosteric activator; ligand shared between dimeric partners</note>
    </ligand>
</feature>
<feature type="binding site" description="in other chain" evidence="1">
    <location>
        <begin position="214"/>
        <end position="216"/>
    </location>
    <ligand>
        <name>ADP</name>
        <dbReference type="ChEBI" id="CHEBI:456216"/>
        <note>allosteric activator; ligand shared between dimeric partners</note>
    </ligand>
</feature>
<feature type="binding site" description="in other chain" evidence="1">
    <location>
        <position position="223"/>
    </location>
    <ligand>
        <name>substrate</name>
        <note>ligand shared between dimeric partners</note>
    </ligand>
</feature>
<feature type="binding site" evidence="1">
    <location>
        <position position="245"/>
    </location>
    <ligand>
        <name>substrate</name>
        <note>ligand shared between dimeric partners</note>
    </ligand>
</feature>
<feature type="binding site" description="in other chain" evidence="1">
    <location>
        <begin position="251"/>
        <end position="254"/>
    </location>
    <ligand>
        <name>substrate</name>
        <note>ligand shared between dimeric partners</note>
    </ligand>
</feature>
<comment type="function">
    <text evidence="1">Catalyzes the phosphorylation of D-fructose 6-phosphate to fructose 1,6-bisphosphate by ATP, the first committing step of glycolysis.</text>
</comment>
<comment type="catalytic activity">
    <reaction evidence="1">
        <text>beta-D-fructose 6-phosphate + ATP = beta-D-fructose 1,6-bisphosphate + ADP + H(+)</text>
        <dbReference type="Rhea" id="RHEA:16109"/>
        <dbReference type="ChEBI" id="CHEBI:15378"/>
        <dbReference type="ChEBI" id="CHEBI:30616"/>
        <dbReference type="ChEBI" id="CHEBI:32966"/>
        <dbReference type="ChEBI" id="CHEBI:57634"/>
        <dbReference type="ChEBI" id="CHEBI:456216"/>
        <dbReference type="EC" id="2.7.1.11"/>
    </reaction>
</comment>
<comment type="cofactor">
    <cofactor evidence="1">
        <name>Mg(2+)</name>
        <dbReference type="ChEBI" id="CHEBI:18420"/>
    </cofactor>
</comment>
<comment type="activity regulation">
    <text evidence="1">Allosterically activated by ADP and other diphosphonucleosides, and allosterically inhibited by phosphoenolpyruvate.</text>
</comment>
<comment type="pathway">
    <text evidence="1">Carbohydrate degradation; glycolysis; D-glyceraldehyde 3-phosphate and glycerone phosphate from D-glucose: step 3/4.</text>
</comment>
<comment type="subunit">
    <text evidence="1">Homotetramer.</text>
</comment>
<comment type="subcellular location">
    <subcellularLocation>
        <location evidence="1">Cytoplasm</location>
    </subcellularLocation>
</comment>
<comment type="similarity">
    <text evidence="1">Belongs to the phosphofructokinase type A (PFKA) family. ATP-dependent PFK group I subfamily. Prokaryotic clade 'B1' sub-subfamily.</text>
</comment>
<keyword id="KW-0021">Allosteric enzyme</keyword>
<keyword id="KW-0067">ATP-binding</keyword>
<keyword id="KW-0963">Cytoplasm</keyword>
<keyword id="KW-0324">Glycolysis</keyword>
<keyword id="KW-0418">Kinase</keyword>
<keyword id="KW-0460">Magnesium</keyword>
<keyword id="KW-0479">Metal-binding</keyword>
<keyword id="KW-0547">Nucleotide-binding</keyword>
<keyword id="KW-0808">Transferase</keyword>
<name>PFKA_STREM</name>
<protein>
    <recommendedName>
        <fullName evidence="1">ATP-dependent 6-phosphofructokinase</fullName>
        <shortName evidence="1">ATP-PFK</shortName>
        <shortName evidence="1">Phosphofructokinase</shortName>
        <ecNumber evidence="1">2.7.1.11</ecNumber>
    </recommendedName>
    <alternativeName>
        <fullName evidence="1">Phosphohexokinase</fullName>
    </alternativeName>
</protein>
<gene>
    <name evidence="1" type="primary">pfkA</name>
    <name type="ordered locus">Sez_0881</name>
</gene>
<proteinExistence type="inferred from homology"/>
<dbReference type="EC" id="2.7.1.11" evidence="1"/>
<dbReference type="EMBL" id="CP001129">
    <property type="protein sequence ID" value="ACG62239.1"/>
    <property type="molecule type" value="Genomic_DNA"/>
</dbReference>
<dbReference type="RefSeq" id="WP_012515510.1">
    <property type="nucleotide sequence ID" value="NC_011134.1"/>
</dbReference>
<dbReference type="SMR" id="B4U2M2"/>
<dbReference type="KEGG" id="sez:Sez_0881"/>
<dbReference type="HOGENOM" id="CLU_020655_0_1_9"/>
<dbReference type="UniPathway" id="UPA00109">
    <property type="reaction ID" value="UER00182"/>
</dbReference>
<dbReference type="Proteomes" id="UP000001873">
    <property type="component" value="Chromosome"/>
</dbReference>
<dbReference type="GO" id="GO:0005945">
    <property type="term" value="C:6-phosphofructokinase complex"/>
    <property type="evidence" value="ECO:0007669"/>
    <property type="project" value="TreeGrafter"/>
</dbReference>
<dbReference type="GO" id="GO:0003872">
    <property type="term" value="F:6-phosphofructokinase activity"/>
    <property type="evidence" value="ECO:0007669"/>
    <property type="project" value="UniProtKB-UniRule"/>
</dbReference>
<dbReference type="GO" id="GO:0016208">
    <property type="term" value="F:AMP binding"/>
    <property type="evidence" value="ECO:0007669"/>
    <property type="project" value="TreeGrafter"/>
</dbReference>
<dbReference type="GO" id="GO:0005524">
    <property type="term" value="F:ATP binding"/>
    <property type="evidence" value="ECO:0007669"/>
    <property type="project" value="UniProtKB-KW"/>
</dbReference>
<dbReference type="GO" id="GO:0070095">
    <property type="term" value="F:fructose-6-phosphate binding"/>
    <property type="evidence" value="ECO:0007669"/>
    <property type="project" value="TreeGrafter"/>
</dbReference>
<dbReference type="GO" id="GO:0042802">
    <property type="term" value="F:identical protein binding"/>
    <property type="evidence" value="ECO:0007669"/>
    <property type="project" value="TreeGrafter"/>
</dbReference>
<dbReference type="GO" id="GO:0046872">
    <property type="term" value="F:metal ion binding"/>
    <property type="evidence" value="ECO:0007669"/>
    <property type="project" value="UniProtKB-KW"/>
</dbReference>
<dbReference type="GO" id="GO:0048029">
    <property type="term" value="F:monosaccharide binding"/>
    <property type="evidence" value="ECO:0007669"/>
    <property type="project" value="TreeGrafter"/>
</dbReference>
<dbReference type="GO" id="GO:0061621">
    <property type="term" value="P:canonical glycolysis"/>
    <property type="evidence" value="ECO:0007669"/>
    <property type="project" value="TreeGrafter"/>
</dbReference>
<dbReference type="GO" id="GO:0030388">
    <property type="term" value="P:fructose 1,6-bisphosphate metabolic process"/>
    <property type="evidence" value="ECO:0007669"/>
    <property type="project" value="TreeGrafter"/>
</dbReference>
<dbReference type="GO" id="GO:0006002">
    <property type="term" value="P:fructose 6-phosphate metabolic process"/>
    <property type="evidence" value="ECO:0007669"/>
    <property type="project" value="InterPro"/>
</dbReference>
<dbReference type="FunFam" id="3.40.50.450:FF:000001">
    <property type="entry name" value="ATP-dependent 6-phosphofructokinase"/>
    <property type="match status" value="1"/>
</dbReference>
<dbReference type="FunFam" id="3.40.50.460:FF:000002">
    <property type="entry name" value="ATP-dependent 6-phosphofructokinase"/>
    <property type="match status" value="1"/>
</dbReference>
<dbReference type="Gene3D" id="3.40.50.450">
    <property type="match status" value="1"/>
</dbReference>
<dbReference type="Gene3D" id="3.40.50.460">
    <property type="entry name" value="Phosphofructokinase domain"/>
    <property type="match status" value="1"/>
</dbReference>
<dbReference type="HAMAP" id="MF_00339">
    <property type="entry name" value="Phosphofructokinase_I_B1"/>
    <property type="match status" value="1"/>
</dbReference>
<dbReference type="InterPro" id="IPR022953">
    <property type="entry name" value="ATP_PFK"/>
</dbReference>
<dbReference type="InterPro" id="IPR012003">
    <property type="entry name" value="ATP_PFK_prok-type"/>
</dbReference>
<dbReference type="InterPro" id="IPR012828">
    <property type="entry name" value="PFKA_ATP_prok"/>
</dbReference>
<dbReference type="InterPro" id="IPR015912">
    <property type="entry name" value="Phosphofructokinase_CS"/>
</dbReference>
<dbReference type="InterPro" id="IPR000023">
    <property type="entry name" value="Phosphofructokinase_dom"/>
</dbReference>
<dbReference type="InterPro" id="IPR035966">
    <property type="entry name" value="PKF_sf"/>
</dbReference>
<dbReference type="NCBIfam" id="TIGR02482">
    <property type="entry name" value="PFKA_ATP"/>
    <property type="match status" value="1"/>
</dbReference>
<dbReference type="NCBIfam" id="NF002872">
    <property type="entry name" value="PRK03202.1"/>
    <property type="match status" value="1"/>
</dbReference>
<dbReference type="PANTHER" id="PTHR13697:SF4">
    <property type="entry name" value="ATP-DEPENDENT 6-PHOSPHOFRUCTOKINASE"/>
    <property type="match status" value="1"/>
</dbReference>
<dbReference type="PANTHER" id="PTHR13697">
    <property type="entry name" value="PHOSPHOFRUCTOKINASE"/>
    <property type="match status" value="1"/>
</dbReference>
<dbReference type="Pfam" id="PF00365">
    <property type="entry name" value="PFK"/>
    <property type="match status" value="1"/>
</dbReference>
<dbReference type="PIRSF" id="PIRSF000532">
    <property type="entry name" value="ATP_PFK_prok"/>
    <property type="match status" value="1"/>
</dbReference>
<dbReference type="PRINTS" id="PR00476">
    <property type="entry name" value="PHFRCTKINASE"/>
</dbReference>
<dbReference type="SUPFAM" id="SSF53784">
    <property type="entry name" value="Phosphofructokinase"/>
    <property type="match status" value="1"/>
</dbReference>
<dbReference type="PROSITE" id="PS00433">
    <property type="entry name" value="PHOSPHOFRUCTOKINASE"/>
    <property type="match status" value="1"/>
</dbReference>